<dbReference type="EC" id="2.7.1.2" evidence="1"/>
<dbReference type="EMBL" id="AE007869">
    <property type="protein sequence ID" value="AAK86004.2"/>
    <property type="molecule type" value="Genomic_DNA"/>
</dbReference>
<dbReference type="PIR" id="AB2599">
    <property type="entry name" value="AB2599"/>
</dbReference>
<dbReference type="PIR" id="C97381">
    <property type="entry name" value="C97381"/>
</dbReference>
<dbReference type="RefSeq" id="NP_353219.2">
    <property type="nucleotide sequence ID" value="NC_003062.2"/>
</dbReference>
<dbReference type="RefSeq" id="WP_010970711.1">
    <property type="nucleotide sequence ID" value="NC_003062.2"/>
</dbReference>
<dbReference type="SMR" id="Q8UIV7"/>
<dbReference type="STRING" id="176299.Atu0184"/>
<dbReference type="EnsemblBacteria" id="AAK86004">
    <property type="protein sequence ID" value="AAK86004"/>
    <property type="gene ID" value="Atu0184"/>
</dbReference>
<dbReference type="GeneID" id="1132222"/>
<dbReference type="KEGG" id="atu:Atu0184"/>
<dbReference type="PATRIC" id="fig|176299.10.peg.175"/>
<dbReference type="eggNOG" id="COG0837">
    <property type="taxonomic scope" value="Bacteria"/>
</dbReference>
<dbReference type="HOGENOM" id="CLU_042582_1_0_5"/>
<dbReference type="OrthoDB" id="9800595at2"/>
<dbReference type="PhylomeDB" id="Q8UIV7"/>
<dbReference type="Proteomes" id="UP000000813">
    <property type="component" value="Chromosome circular"/>
</dbReference>
<dbReference type="GO" id="GO:0005829">
    <property type="term" value="C:cytosol"/>
    <property type="evidence" value="ECO:0007669"/>
    <property type="project" value="TreeGrafter"/>
</dbReference>
<dbReference type="GO" id="GO:0005524">
    <property type="term" value="F:ATP binding"/>
    <property type="evidence" value="ECO:0007669"/>
    <property type="project" value="UniProtKB-UniRule"/>
</dbReference>
<dbReference type="GO" id="GO:0005536">
    <property type="term" value="F:D-glucose binding"/>
    <property type="evidence" value="ECO:0007669"/>
    <property type="project" value="InterPro"/>
</dbReference>
<dbReference type="GO" id="GO:0004340">
    <property type="term" value="F:glucokinase activity"/>
    <property type="evidence" value="ECO:0007669"/>
    <property type="project" value="UniProtKB-UniRule"/>
</dbReference>
<dbReference type="GO" id="GO:0006096">
    <property type="term" value="P:glycolytic process"/>
    <property type="evidence" value="ECO:0007669"/>
    <property type="project" value="UniProtKB-UniRule"/>
</dbReference>
<dbReference type="CDD" id="cd24008">
    <property type="entry name" value="ASKHA_NBD_GLK"/>
    <property type="match status" value="1"/>
</dbReference>
<dbReference type="Gene3D" id="3.30.420.40">
    <property type="match status" value="1"/>
</dbReference>
<dbReference type="Gene3D" id="3.40.367.20">
    <property type="match status" value="1"/>
</dbReference>
<dbReference type="HAMAP" id="MF_00524">
    <property type="entry name" value="Glucokinase"/>
    <property type="match status" value="1"/>
</dbReference>
<dbReference type="InterPro" id="IPR043129">
    <property type="entry name" value="ATPase_NBD"/>
</dbReference>
<dbReference type="InterPro" id="IPR050201">
    <property type="entry name" value="Bacterial_glucokinase"/>
</dbReference>
<dbReference type="InterPro" id="IPR003836">
    <property type="entry name" value="Glucokinase"/>
</dbReference>
<dbReference type="NCBIfam" id="TIGR00749">
    <property type="entry name" value="glk"/>
    <property type="match status" value="1"/>
</dbReference>
<dbReference type="NCBIfam" id="NF001417">
    <property type="entry name" value="PRK00292.1-4"/>
    <property type="match status" value="1"/>
</dbReference>
<dbReference type="PANTHER" id="PTHR47690">
    <property type="entry name" value="GLUCOKINASE"/>
    <property type="match status" value="1"/>
</dbReference>
<dbReference type="PANTHER" id="PTHR47690:SF1">
    <property type="entry name" value="GLUCOKINASE"/>
    <property type="match status" value="1"/>
</dbReference>
<dbReference type="Pfam" id="PF02685">
    <property type="entry name" value="Glucokinase"/>
    <property type="match status" value="1"/>
</dbReference>
<dbReference type="SUPFAM" id="SSF53067">
    <property type="entry name" value="Actin-like ATPase domain"/>
    <property type="match status" value="1"/>
</dbReference>
<reference key="1">
    <citation type="journal article" date="2001" name="Science">
        <title>The genome of the natural genetic engineer Agrobacterium tumefaciens C58.</title>
        <authorList>
            <person name="Wood D.W."/>
            <person name="Setubal J.C."/>
            <person name="Kaul R."/>
            <person name="Monks D.E."/>
            <person name="Kitajima J.P."/>
            <person name="Okura V.K."/>
            <person name="Zhou Y."/>
            <person name="Chen L."/>
            <person name="Wood G.E."/>
            <person name="Almeida N.F. Jr."/>
            <person name="Woo L."/>
            <person name="Chen Y."/>
            <person name="Paulsen I.T."/>
            <person name="Eisen J.A."/>
            <person name="Karp P.D."/>
            <person name="Bovee D. Sr."/>
            <person name="Chapman P."/>
            <person name="Clendenning J."/>
            <person name="Deatherage G."/>
            <person name="Gillet W."/>
            <person name="Grant C."/>
            <person name="Kutyavin T."/>
            <person name="Levy R."/>
            <person name="Li M.-J."/>
            <person name="McClelland E."/>
            <person name="Palmieri A."/>
            <person name="Raymond C."/>
            <person name="Rouse G."/>
            <person name="Saenphimmachak C."/>
            <person name="Wu Z."/>
            <person name="Romero P."/>
            <person name="Gordon D."/>
            <person name="Zhang S."/>
            <person name="Yoo H."/>
            <person name="Tao Y."/>
            <person name="Biddle P."/>
            <person name="Jung M."/>
            <person name="Krespan W."/>
            <person name="Perry M."/>
            <person name="Gordon-Kamm B."/>
            <person name="Liao L."/>
            <person name="Kim S."/>
            <person name="Hendrick C."/>
            <person name="Zhao Z.-Y."/>
            <person name="Dolan M."/>
            <person name="Chumley F."/>
            <person name="Tingey S.V."/>
            <person name="Tomb J.-F."/>
            <person name="Gordon M.P."/>
            <person name="Olson M.V."/>
            <person name="Nester E.W."/>
        </authorList>
    </citation>
    <scope>NUCLEOTIDE SEQUENCE [LARGE SCALE GENOMIC DNA]</scope>
    <source>
        <strain>C58 / ATCC 33970</strain>
    </source>
</reference>
<reference key="2">
    <citation type="journal article" date="2001" name="Science">
        <title>Genome sequence of the plant pathogen and biotechnology agent Agrobacterium tumefaciens C58.</title>
        <authorList>
            <person name="Goodner B."/>
            <person name="Hinkle G."/>
            <person name="Gattung S."/>
            <person name="Miller N."/>
            <person name="Blanchard M."/>
            <person name="Qurollo B."/>
            <person name="Goldman B.S."/>
            <person name="Cao Y."/>
            <person name="Askenazi M."/>
            <person name="Halling C."/>
            <person name="Mullin L."/>
            <person name="Houmiel K."/>
            <person name="Gordon J."/>
            <person name="Vaudin M."/>
            <person name="Iartchouk O."/>
            <person name="Epp A."/>
            <person name="Liu F."/>
            <person name="Wollam C."/>
            <person name="Allinger M."/>
            <person name="Doughty D."/>
            <person name="Scott C."/>
            <person name="Lappas C."/>
            <person name="Markelz B."/>
            <person name="Flanagan C."/>
            <person name="Crowell C."/>
            <person name="Gurson J."/>
            <person name="Lomo C."/>
            <person name="Sear C."/>
            <person name="Strub G."/>
            <person name="Cielo C."/>
            <person name="Slater S."/>
        </authorList>
    </citation>
    <scope>NUCLEOTIDE SEQUENCE [LARGE SCALE GENOMIC DNA]</scope>
    <source>
        <strain>C58 / ATCC 33970</strain>
    </source>
</reference>
<protein>
    <recommendedName>
        <fullName evidence="1">Glucokinase</fullName>
        <ecNumber evidence="1">2.7.1.2</ecNumber>
    </recommendedName>
    <alternativeName>
        <fullName evidence="1">Glucose kinase</fullName>
    </alternativeName>
</protein>
<proteinExistence type="inferred from homology"/>
<name>GLK_AGRFC</name>
<organism>
    <name type="scientific">Agrobacterium fabrum (strain C58 / ATCC 33970)</name>
    <name type="common">Agrobacterium tumefaciens (strain C58)</name>
    <dbReference type="NCBI Taxonomy" id="176299"/>
    <lineage>
        <taxon>Bacteria</taxon>
        <taxon>Pseudomonadati</taxon>
        <taxon>Pseudomonadota</taxon>
        <taxon>Alphaproteobacteria</taxon>
        <taxon>Hyphomicrobiales</taxon>
        <taxon>Rhizobiaceae</taxon>
        <taxon>Rhizobium/Agrobacterium group</taxon>
        <taxon>Agrobacterium</taxon>
        <taxon>Agrobacterium tumefaciens complex</taxon>
    </lineage>
</organism>
<sequence>MPKTSDTEYLSFPILLGDIGGTNARFSILIDSFAEPVHLTTVKTAEYPGIDDAIQQAVLDKTSLQPVSTILAIAGPIEGDEIPLTNCHWVVKPKDMLAKLGLKDVIVINDFEAQALAIAALDDDNREPIGSGKKDMLASRVVLGPGTGLGVAGLVYARHMWFPVPGEGGHIDIGPRSARDYVVFPHIETIEGRVAGEQILCGRGLVNLYRAICKADGIEPVFSDPADITSQGLSGQNAQAKETLSLFSTYLGRVAGDLALIFMAKGGVYLAGGISQKIIPALKSPEFRAAFEDKAPHSALMRTIPTFVVTHPQAALSGLATYARTPADFGLALDGRRWRA</sequence>
<comment type="catalytic activity">
    <reaction evidence="1">
        <text>D-glucose + ATP = D-glucose 6-phosphate + ADP + H(+)</text>
        <dbReference type="Rhea" id="RHEA:17825"/>
        <dbReference type="ChEBI" id="CHEBI:4167"/>
        <dbReference type="ChEBI" id="CHEBI:15378"/>
        <dbReference type="ChEBI" id="CHEBI:30616"/>
        <dbReference type="ChEBI" id="CHEBI:61548"/>
        <dbReference type="ChEBI" id="CHEBI:456216"/>
        <dbReference type="EC" id="2.7.1.2"/>
    </reaction>
</comment>
<comment type="subcellular location">
    <subcellularLocation>
        <location evidence="1">Cytoplasm</location>
    </subcellularLocation>
</comment>
<comment type="similarity">
    <text evidence="1">Belongs to the bacterial glucokinase family.</text>
</comment>
<keyword id="KW-0067">ATP-binding</keyword>
<keyword id="KW-0963">Cytoplasm</keyword>
<keyword id="KW-0324">Glycolysis</keyword>
<keyword id="KW-0418">Kinase</keyword>
<keyword id="KW-0547">Nucleotide-binding</keyword>
<keyword id="KW-1185">Reference proteome</keyword>
<keyword id="KW-0808">Transferase</keyword>
<feature type="chain" id="PRO_0000215118" description="Glucokinase">
    <location>
        <begin position="1"/>
        <end position="340"/>
    </location>
</feature>
<feature type="binding site" evidence="1">
    <location>
        <begin position="17"/>
        <end position="22"/>
    </location>
    <ligand>
        <name>ATP</name>
        <dbReference type="ChEBI" id="CHEBI:30616"/>
    </ligand>
</feature>
<evidence type="ECO:0000255" key="1">
    <source>
        <dbReference type="HAMAP-Rule" id="MF_00524"/>
    </source>
</evidence>
<gene>
    <name evidence="1" type="primary">glk</name>
    <name type="ordered locus">Atu0184</name>
    <name type="ORF">AGR_C_310</name>
</gene>
<accession>Q8UIV7</accession>